<feature type="initiator methionine" description="Removed; by host" evidence="5">
    <location>
        <position position="1"/>
    </location>
</feature>
<feature type="chain" id="PRO_0000259725" description="Gag-Pol polyprotein">
    <location>
        <begin position="2"/>
        <end position="1739"/>
    </location>
</feature>
<feature type="chain" id="PRO_0000442891" description="Matrix protein p15">
    <location>
        <begin position="2"/>
        <end position="132"/>
    </location>
</feature>
<feature type="chain" id="PRO_0000442892" description="RNA-binding phosphoprotein p12">
    <location>
        <begin position="133"/>
        <end position="216"/>
    </location>
</feature>
<feature type="chain" id="PRO_0000442893" description="Capsid protein p30">
    <location>
        <begin position="217"/>
        <end position="479"/>
    </location>
</feature>
<feature type="chain" id="PRO_0000442894" description="Nucleocapsid protein p10-Pol">
    <location>
        <begin position="480"/>
        <end position="535"/>
    </location>
</feature>
<feature type="chain" id="PRO_0000026130" description="Protease">
    <location>
        <begin position="536"/>
        <end position="660"/>
    </location>
</feature>
<feature type="chain" id="PRO_0000259726" description="Reverse transcriptase/ribonuclease H">
    <location>
        <begin position="661"/>
        <end position="1331"/>
    </location>
</feature>
<feature type="chain" id="PRO_0000259727" description="Integrase">
    <location>
        <begin position="1332"/>
        <end position="1739"/>
    </location>
</feature>
<feature type="domain" description="Peptidase A2" evidence="7">
    <location>
        <begin position="562"/>
        <end position="632"/>
    </location>
</feature>
<feature type="domain" description="Reverse transcriptase" evidence="8">
    <location>
        <begin position="742"/>
        <end position="933"/>
    </location>
</feature>
<feature type="domain" description="RNase H type-1" evidence="9">
    <location>
        <begin position="1175"/>
        <end position="1321"/>
    </location>
</feature>
<feature type="domain" description="Integrase catalytic" evidence="10">
    <location>
        <begin position="1445"/>
        <end position="1603"/>
    </location>
</feature>
<feature type="zinc finger region" description="CCHC-type" evidence="6">
    <location>
        <begin position="503"/>
        <end position="520"/>
    </location>
</feature>
<feature type="zinc finger region" description="HHCC-type" evidence="3">
    <location>
        <begin position="1388"/>
        <end position="1428"/>
    </location>
</feature>
<feature type="region of interest" description="Disordered" evidence="11">
    <location>
        <begin position="111"/>
        <end position="222"/>
    </location>
</feature>
<feature type="region of interest" description="Interaction with host PIAS4" evidence="1">
    <location>
        <begin position="346"/>
        <end position="394"/>
    </location>
</feature>
<feature type="region of interest" description="Interaction with host UBE2I" evidence="1">
    <location>
        <begin position="431"/>
        <end position="436"/>
    </location>
</feature>
<feature type="region of interest" description="Disordered" evidence="11">
    <location>
        <begin position="435"/>
        <end position="500"/>
    </location>
</feature>
<feature type="region of interest" description="Disordered" evidence="11">
    <location>
        <begin position="514"/>
        <end position="553"/>
    </location>
</feature>
<feature type="coiled-coil region" evidence="5">
    <location>
        <begin position="439"/>
        <end position="479"/>
    </location>
</feature>
<feature type="short sequence motif" description="PTAP/PSAP motif" evidence="1">
    <location>
        <begin position="112"/>
        <end position="115"/>
    </location>
</feature>
<feature type="short sequence motif" description="LYPX(n)L motif" evidence="1">
    <location>
        <begin position="131"/>
        <end position="135"/>
    </location>
</feature>
<feature type="short sequence motif" description="PPXY motif" evidence="1">
    <location>
        <begin position="163"/>
        <end position="166"/>
    </location>
</feature>
<feature type="compositionally biased region" description="Pro residues" evidence="11">
    <location>
        <begin position="111"/>
        <end position="127"/>
    </location>
</feature>
<feature type="compositionally biased region" description="Basic and acidic residues" evidence="11">
    <location>
        <begin position="435"/>
        <end position="467"/>
    </location>
</feature>
<feature type="compositionally biased region" description="Basic and acidic residues" evidence="11">
    <location>
        <begin position="487"/>
        <end position="500"/>
    </location>
</feature>
<feature type="active site" description="Protease; shared with dimeric partner" evidence="7">
    <location>
        <position position="567"/>
    </location>
</feature>
<feature type="binding site" evidence="8">
    <location>
        <position position="810"/>
    </location>
    <ligand>
        <name>Mg(2+)</name>
        <dbReference type="ChEBI" id="CHEBI:18420"/>
        <label>1</label>
        <note>catalytic; for reverse transcriptase activity</note>
    </ligand>
</feature>
<feature type="binding site" evidence="8">
    <location>
        <position position="884"/>
    </location>
    <ligand>
        <name>Mg(2+)</name>
        <dbReference type="ChEBI" id="CHEBI:18420"/>
        <label>1</label>
        <note>catalytic; for reverse transcriptase activity</note>
    </ligand>
</feature>
<feature type="binding site" evidence="8">
    <location>
        <position position="885"/>
    </location>
    <ligand>
        <name>Mg(2+)</name>
        <dbReference type="ChEBI" id="CHEBI:18420"/>
        <label>1</label>
        <note>catalytic; for reverse transcriptase activity</note>
    </ligand>
</feature>
<feature type="binding site" evidence="9">
    <location>
        <position position="1184"/>
    </location>
    <ligand>
        <name>Mg(2+)</name>
        <dbReference type="ChEBI" id="CHEBI:18420"/>
        <label>2</label>
        <note>catalytic; for RNase H activity</note>
    </ligand>
</feature>
<feature type="binding site" evidence="9">
    <location>
        <position position="1222"/>
    </location>
    <ligand>
        <name>Mg(2+)</name>
        <dbReference type="ChEBI" id="CHEBI:18420"/>
        <label>2</label>
        <note>catalytic; for RNase H activity</note>
    </ligand>
</feature>
<feature type="binding site" evidence="9">
    <location>
        <position position="1243"/>
    </location>
    <ligand>
        <name>Mg(2+)</name>
        <dbReference type="ChEBI" id="CHEBI:18420"/>
        <label>2</label>
        <note>catalytic; for RNase H activity</note>
    </ligand>
</feature>
<feature type="binding site" evidence="9">
    <location>
        <position position="1313"/>
    </location>
    <ligand>
        <name>Mg(2+)</name>
        <dbReference type="ChEBI" id="CHEBI:18420"/>
        <label>2</label>
        <note>catalytic; for RNase H activity</note>
    </ligand>
</feature>
<feature type="binding site" evidence="10">
    <location>
        <position position="1456"/>
    </location>
    <ligand>
        <name>Mg(2+)</name>
        <dbReference type="ChEBI" id="CHEBI:18420"/>
        <label>3</label>
        <note>catalytic; for integrase activity</note>
    </ligand>
</feature>
<feature type="binding site" evidence="10">
    <location>
        <position position="1515"/>
    </location>
    <ligand>
        <name>Mg(2+)</name>
        <dbReference type="ChEBI" id="CHEBI:18420"/>
        <label>3</label>
        <note>catalytic; for integrase activity</note>
    </ligand>
</feature>
<feature type="site" description="Cleavage; by viral protease" evidence="3">
    <location>
        <begin position="132"/>
        <end position="133"/>
    </location>
</feature>
<feature type="site" description="Cleavage; by viral protease" evidence="3">
    <location>
        <begin position="216"/>
        <end position="217"/>
    </location>
</feature>
<feature type="site" description="Cleavage; by viral protease" evidence="3">
    <location>
        <begin position="479"/>
        <end position="480"/>
    </location>
</feature>
<feature type="site" description="Cleavage; by viral protease" evidence="3">
    <location>
        <begin position="535"/>
        <end position="536"/>
    </location>
</feature>
<feature type="site" description="Cleavage; by viral protease" evidence="3">
    <location>
        <begin position="660"/>
        <end position="661"/>
    </location>
</feature>
<feature type="site" description="Cleavage; by viral protease" evidence="3">
    <location>
        <begin position="1331"/>
        <end position="1332"/>
    </location>
</feature>
<feature type="modified residue" description="Phosphoserine; by host" evidence="3">
    <location>
        <position position="193"/>
    </location>
</feature>
<feature type="lipid moiety-binding region" description="N-myristoyl glycine; by host" evidence="5">
    <location>
        <position position="2"/>
    </location>
</feature>
<organismHost>
    <name type="scientific">Mus musculus</name>
    <name type="common">Mouse</name>
    <dbReference type="NCBI Taxonomy" id="10090"/>
</organismHost>
<evidence type="ECO:0000250" key="1">
    <source>
        <dbReference type="UniProtKB" id="P03332"/>
    </source>
</evidence>
<evidence type="ECO:0000250" key="2">
    <source>
        <dbReference type="UniProtKB" id="P03336"/>
    </source>
</evidence>
<evidence type="ECO:0000250" key="3">
    <source>
        <dbReference type="UniProtKB" id="P03355"/>
    </source>
</evidence>
<evidence type="ECO:0000250" key="4">
    <source>
        <dbReference type="UniProtKB" id="P26807"/>
    </source>
</evidence>
<evidence type="ECO:0000255" key="5"/>
<evidence type="ECO:0000255" key="6">
    <source>
        <dbReference type="PROSITE-ProRule" id="PRU00047"/>
    </source>
</evidence>
<evidence type="ECO:0000255" key="7">
    <source>
        <dbReference type="PROSITE-ProRule" id="PRU00275"/>
    </source>
</evidence>
<evidence type="ECO:0000255" key="8">
    <source>
        <dbReference type="PROSITE-ProRule" id="PRU00405"/>
    </source>
</evidence>
<evidence type="ECO:0000255" key="9">
    <source>
        <dbReference type="PROSITE-ProRule" id="PRU00408"/>
    </source>
</evidence>
<evidence type="ECO:0000255" key="10">
    <source>
        <dbReference type="PROSITE-ProRule" id="PRU00457"/>
    </source>
</evidence>
<evidence type="ECO:0000256" key="11">
    <source>
        <dbReference type="SAM" id="MobiDB-lite"/>
    </source>
</evidence>
<evidence type="ECO:0000305" key="12"/>
<keyword id="KW-0064">Aspartyl protease</keyword>
<keyword id="KW-0167">Capsid protein</keyword>
<keyword id="KW-0175">Coiled coil</keyword>
<keyword id="KW-0229">DNA integration</keyword>
<keyword id="KW-0233">DNA recombination</keyword>
<keyword id="KW-0238">DNA-binding</keyword>
<keyword id="KW-0239">DNA-directed DNA polymerase</keyword>
<keyword id="KW-0255">Endonuclease</keyword>
<keyword id="KW-1262">Eukaryotic host gene expression shutoff by virus</keyword>
<keyword id="KW-1193">Eukaryotic host translation shutoff by virus</keyword>
<keyword id="KW-1032">Host cell membrane</keyword>
<keyword id="KW-1035">Host cytoplasm</keyword>
<keyword id="KW-1039">Host endosome</keyword>
<keyword id="KW-1190">Host gene expression shutoff by virus</keyword>
<keyword id="KW-1043">Host membrane</keyword>
<keyword id="KW-0945">Host-virus interaction</keyword>
<keyword id="KW-0378">Hydrolase</keyword>
<keyword id="KW-0449">Lipoprotein</keyword>
<keyword id="KW-0460">Magnesium</keyword>
<keyword id="KW-0472">Membrane</keyword>
<keyword id="KW-0479">Metal-binding</keyword>
<keyword id="KW-0511">Multifunctional enzyme</keyword>
<keyword id="KW-0519">Myristate</keyword>
<keyword id="KW-0540">Nuclease</keyword>
<keyword id="KW-0548">Nucleotidyltransferase</keyword>
<keyword id="KW-0597">Phosphoprotein</keyword>
<keyword id="KW-0645">Protease</keyword>
<keyword id="KW-1159">RNA suppression of termination</keyword>
<keyword id="KW-0694">RNA-binding</keyword>
<keyword id="KW-0695">RNA-directed DNA polymerase</keyword>
<keyword id="KW-0808">Transferase</keyword>
<keyword id="KW-0832">Ubl conjugation</keyword>
<keyword id="KW-1179">Viral genome integration</keyword>
<keyword id="KW-0468">Viral matrix protein</keyword>
<keyword id="KW-0543">Viral nucleoprotein</keyword>
<keyword id="KW-0946">Virion</keyword>
<keyword id="KW-1160">Virus entry into host cell</keyword>
<keyword id="KW-0862">Zinc</keyword>
<keyword id="KW-0863">Zinc-finger</keyword>
<sequence>MGQTVTTPLSLTLDHWKDVERTAHNQSVEIRKRRWVTLCSAEWPTFNVGWPRDGTFNPDIITQVKIKVFSSGPHGHPDQVPYIVTWEALAADPPPWVKPFVHPKPPPLLLPPSAPSLPPEPPFPTPPQSSLYPALTSPLNTKPRPQVLPDSGGPLIDLLTEDPPPYRDPGPSSSDGNGGSGEVAPTEGAPDSSPMVSRLRGRREPPVADSTTSQAFPLRQGGNGQFQYWPFSSSDLYNWKNNNPSFSEDPAKLTALIESVLLTHQPTWDDCQQLLGTLLTGEEKQRVLLEARKAVRGEDGRPTQLPNDINDAFPLERPDWDYNTQRGRNHLVHYRQLLLAGLQNAGRSPTNLAKVKGITQGPNESPSAFLERLKEAYRRYTPYDPEDPGQETNVAMSFIWQSAPDIGRKLERLEDLKSKTLGDLVREAEKIFNKRETPEEREERIRRETEEKEERRRAEDEQREKERDRRRHREMSKLLATVISGQRQDRQGGERRRPQLDHDQCAYCKEKGHWARDCPKKPRGPRGPRPQASLLTLDDQGGQGQEPPPEPRITLKVGGQPVTFLVDTGAQHSVLTQNPGPLSDKSAWVQGATGGKRYRWTTDRRVHLATGKVTHSFLHVPDCPYPLLGRHLLTKLKAQIHFEGSGAQVVGPMGQPLQVLTLNIEDEYRLHETSKGPDVPLGSTWLSDFPQAWAETGGMGLAFRQAPLIISLKATSTPVSIKQYPMSQEARLGIKPHIQRLLDQGILVPCQSPWNTPLLPVKKPGTNDYRPVQDLREVNKRVEDIHPTVPNPYNLLSGLPPSHQWYTVLDLKDAFFCLRLHPTSQSLFAFEWKDPEMGISGQLTWTRLPQGFKNSPTLFDEALHRDLADFRIQHPDLILLQYVDDLLLAATSELDCQQGTRALLQTLGDLGYRASAKKAQICQKQVKYLGYLLKEGQRWLTEARKETVMGQPTPKTPRQLREFLGTAGLCRLWIPGFAEMAAPLYPLTKTGTLFKWGPDQQKAYQEIKQALLTAPALGLPDLTKPFELFVDEKQGYAKGVLTQKLGPWRRPVAYLSKKLDPVAAGWPPCLRMVAAIAVLTKDVGKLTMGQPLVILAPHAVEALVKQPPDRWLSNARMTHYQALLLDTDRVQFGPIVALNPATLLPLPEEGLQHDCLDILAEAHGTRPDLTDQPLPDADHTWYTDGSSFLQEGQRRAGAAVTTETEVIWAKALPAGTSAQRAELIALTQALKMAAGKKLNVYTDSRYAFATAHIHGEIYRRRGLLTSEGKEIKNKDEILALLKALFLPKRLSIIHCPGHQKGNHAEARGNRMADQAAREVATRETPETSTLLIENSAPYTREHFHYTVTDIKDLTKLGATYDDAKKCWVYQGKPVMPDQFTFELLDFLHQLTHLSFSKTKALLERSYSPSYMLNRDRTLKDITETCKACAQVNASKSAVKQGTRVRGHRPGTHWEIDFTEVKPGLYGYKYLLVFVDTFSGWVEAFPTKKETAKVVTKKLLEEIFPRFGMPQVLGTDNGPAFVSKVSQTVADLLGVDWKLHCAYRPQSSGQVERMNRTIKETLTKLTLATGSRDWVLLLPLALYRARNTPGPHGLTPYEILYGAPPPLVNFPDPDMAKVTHNPSLQAHLQALYLVQHEVWRPLAAAYQEQLDRPVVPHPFRVGDTVWVRRHQTKNLEPRWKGPYTVLLTTPTALKVDGIAAWIHAAHVKAADTRIEPPAESTWRVQRSQNPLKIRLTRGTS</sequence>
<proteinExistence type="inferred from homology"/>
<organism>
    <name type="scientific">Friend murine leukemia virus (isolate 57)</name>
    <name type="common">FrMLV</name>
    <dbReference type="NCBI Taxonomy" id="11796"/>
    <lineage>
        <taxon>Viruses</taxon>
        <taxon>Riboviria</taxon>
        <taxon>Pararnavirae</taxon>
        <taxon>Artverviricota</taxon>
        <taxon>Revtraviricetes</taxon>
        <taxon>Ortervirales</taxon>
        <taxon>Retroviridae</taxon>
        <taxon>Orthoretrovirinae</taxon>
        <taxon>Gammaretrovirus</taxon>
        <taxon>Murine leukemia virus</taxon>
    </lineage>
</organism>
<dbReference type="EC" id="3.4.23.-" evidence="7"/>
<dbReference type="EC" id="2.7.7.49" evidence="8"/>
<dbReference type="EC" id="2.7.7.7" evidence="8"/>
<dbReference type="EC" id="3.1.26.4" evidence="9"/>
<dbReference type="EC" id="2.7.7.-" evidence="3"/>
<dbReference type="EC" id="3.1.-.-" evidence="3"/>
<dbReference type="EMBL" id="X02794">
    <property type="status" value="NOT_ANNOTATED_CDS"/>
    <property type="molecule type" value="Genomic_RNA"/>
</dbReference>
<dbReference type="SMR" id="P26810"/>
<dbReference type="Proteomes" id="UP000007776">
    <property type="component" value="Genome"/>
</dbReference>
<dbReference type="GO" id="GO:0044185">
    <property type="term" value="C:host cell late endosome membrane"/>
    <property type="evidence" value="ECO:0007669"/>
    <property type="project" value="UniProtKB-SubCell"/>
</dbReference>
<dbReference type="GO" id="GO:0020002">
    <property type="term" value="C:host cell plasma membrane"/>
    <property type="evidence" value="ECO:0007669"/>
    <property type="project" value="UniProtKB-SubCell"/>
</dbReference>
<dbReference type="GO" id="GO:0072494">
    <property type="term" value="C:host multivesicular body"/>
    <property type="evidence" value="ECO:0007669"/>
    <property type="project" value="UniProtKB-SubCell"/>
</dbReference>
<dbReference type="GO" id="GO:0016020">
    <property type="term" value="C:membrane"/>
    <property type="evidence" value="ECO:0007669"/>
    <property type="project" value="UniProtKB-KW"/>
</dbReference>
<dbReference type="GO" id="GO:0019013">
    <property type="term" value="C:viral nucleocapsid"/>
    <property type="evidence" value="ECO:0007669"/>
    <property type="project" value="UniProtKB-KW"/>
</dbReference>
<dbReference type="GO" id="GO:0004190">
    <property type="term" value="F:aspartic-type endopeptidase activity"/>
    <property type="evidence" value="ECO:0007669"/>
    <property type="project" value="UniProtKB-KW"/>
</dbReference>
<dbReference type="GO" id="GO:0003677">
    <property type="term" value="F:DNA binding"/>
    <property type="evidence" value="ECO:0007669"/>
    <property type="project" value="UniProtKB-KW"/>
</dbReference>
<dbReference type="GO" id="GO:0003887">
    <property type="term" value="F:DNA-directed DNA polymerase activity"/>
    <property type="evidence" value="ECO:0007669"/>
    <property type="project" value="UniProtKB-KW"/>
</dbReference>
<dbReference type="GO" id="GO:0003723">
    <property type="term" value="F:RNA binding"/>
    <property type="evidence" value="ECO:0007669"/>
    <property type="project" value="UniProtKB-KW"/>
</dbReference>
<dbReference type="GO" id="GO:0003964">
    <property type="term" value="F:RNA-directed DNA polymerase activity"/>
    <property type="evidence" value="ECO:0007669"/>
    <property type="project" value="UniProtKB-KW"/>
</dbReference>
<dbReference type="GO" id="GO:0004523">
    <property type="term" value="F:RNA-DNA hybrid ribonuclease activity"/>
    <property type="evidence" value="ECO:0007669"/>
    <property type="project" value="UniProtKB-EC"/>
</dbReference>
<dbReference type="GO" id="GO:0039660">
    <property type="term" value="F:structural constituent of virion"/>
    <property type="evidence" value="ECO:0007669"/>
    <property type="project" value="UniProtKB-KW"/>
</dbReference>
<dbReference type="GO" id="GO:0008270">
    <property type="term" value="F:zinc ion binding"/>
    <property type="evidence" value="ECO:0007669"/>
    <property type="project" value="UniProtKB-KW"/>
</dbReference>
<dbReference type="GO" id="GO:0015074">
    <property type="term" value="P:DNA integration"/>
    <property type="evidence" value="ECO:0007669"/>
    <property type="project" value="UniProtKB-KW"/>
</dbReference>
<dbReference type="GO" id="GO:0006310">
    <property type="term" value="P:DNA recombination"/>
    <property type="evidence" value="ECO:0007669"/>
    <property type="project" value="UniProtKB-KW"/>
</dbReference>
<dbReference type="GO" id="GO:0075713">
    <property type="term" value="P:establishment of integrated proviral latency"/>
    <property type="evidence" value="ECO:0007669"/>
    <property type="project" value="UniProtKB-KW"/>
</dbReference>
<dbReference type="GO" id="GO:0006508">
    <property type="term" value="P:proteolysis"/>
    <property type="evidence" value="ECO:0007669"/>
    <property type="project" value="UniProtKB-KW"/>
</dbReference>
<dbReference type="GO" id="GO:0046718">
    <property type="term" value="P:symbiont entry into host cell"/>
    <property type="evidence" value="ECO:0007669"/>
    <property type="project" value="UniProtKB-KW"/>
</dbReference>
<dbReference type="GO" id="GO:0039657">
    <property type="term" value="P:symbiont-mediated suppression of host gene expression"/>
    <property type="evidence" value="ECO:0007669"/>
    <property type="project" value="UniProtKB-KW"/>
</dbReference>
<dbReference type="GO" id="GO:0044826">
    <property type="term" value="P:viral genome integration into host DNA"/>
    <property type="evidence" value="ECO:0007669"/>
    <property type="project" value="UniProtKB-KW"/>
</dbReference>
<dbReference type="GO" id="GO:0019068">
    <property type="term" value="P:virion assembly"/>
    <property type="evidence" value="ECO:0007669"/>
    <property type="project" value="InterPro"/>
</dbReference>
<dbReference type="CDD" id="cd09273">
    <property type="entry name" value="RNase_HI_RT_Bel"/>
    <property type="match status" value="1"/>
</dbReference>
<dbReference type="CDD" id="cd06095">
    <property type="entry name" value="RP_RTVL_H_like"/>
    <property type="match status" value="1"/>
</dbReference>
<dbReference type="CDD" id="cd03715">
    <property type="entry name" value="RT_ZFREV_like"/>
    <property type="match status" value="1"/>
</dbReference>
<dbReference type="FunFam" id="2.40.70.10:FF:000087">
    <property type="entry name" value="Gag-Pol polyprotein"/>
    <property type="match status" value="1"/>
</dbReference>
<dbReference type="FunFam" id="3.30.420.10:FF:000094">
    <property type="entry name" value="Gag-Pol polyprotein"/>
    <property type="match status" value="1"/>
</dbReference>
<dbReference type="FunFam" id="3.30.420.10:FF:000102">
    <property type="entry name" value="Gag-Pol polyprotein"/>
    <property type="match status" value="1"/>
</dbReference>
<dbReference type="Gene3D" id="1.10.340.70">
    <property type="match status" value="1"/>
</dbReference>
<dbReference type="Gene3D" id="2.30.30.850">
    <property type="match status" value="1"/>
</dbReference>
<dbReference type="Gene3D" id="3.10.20.370">
    <property type="match status" value="1"/>
</dbReference>
<dbReference type="Gene3D" id="3.30.70.270">
    <property type="match status" value="2"/>
</dbReference>
<dbReference type="Gene3D" id="2.40.70.10">
    <property type="entry name" value="Acid Proteases"/>
    <property type="match status" value="1"/>
</dbReference>
<dbReference type="Gene3D" id="1.10.150.180">
    <property type="entry name" value="Gamma-retroviral matrix domain"/>
    <property type="match status" value="1"/>
</dbReference>
<dbReference type="Gene3D" id="3.10.10.10">
    <property type="entry name" value="HIV Type 1 Reverse Transcriptase, subunit A, domain 1"/>
    <property type="match status" value="1"/>
</dbReference>
<dbReference type="Gene3D" id="1.10.375.10">
    <property type="entry name" value="Human Immunodeficiency Virus Type 1 Capsid Protein"/>
    <property type="match status" value="1"/>
</dbReference>
<dbReference type="Gene3D" id="3.30.420.10">
    <property type="entry name" value="Ribonuclease H-like superfamily/Ribonuclease H"/>
    <property type="match status" value="2"/>
</dbReference>
<dbReference type="Gene3D" id="4.10.60.10">
    <property type="entry name" value="Zinc finger, CCHC-type"/>
    <property type="match status" value="1"/>
</dbReference>
<dbReference type="InterPro" id="IPR001969">
    <property type="entry name" value="Aspartic_peptidase_AS"/>
</dbReference>
<dbReference type="InterPro" id="IPR043502">
    <property type="entry name" value="DNA/RNA_pol_sf"/>
</dbReference>
<dbReference type="InterPro" id="IPR000840">
    <property type="entry name" value="G_retro_matrix"/>
</dbReference>
<dbReference type="InterPro" id="IPR036946">
    <property type="entry name" value="G_retro_matrix_sf"/>
</dbReference>
<dbReference type="InterPro" id="IPR039464">
    <property type="entry name" value="Gag-pol_Znf-H3C2"/>
</dbReference>
<dbReference type="InterPro" id="IPR002079">
    <property type="entry name" value="Gag_p12"/>
</dbReference>
<dbReference type="InterPro" id="IPR003036">
    <property type="entry name" value="Gag_P30"/>
</dbReference>
<dbReference type="InterPro" id="IPR001584">
    <property type="entry name" value="Integrase_cat-core"/>
</dbReference>
<dbReference type="InterPro" id="IPR040643">
    <property type="entry name" value="MLVIN_C"/>
</dbReference>
<dbReference type="InterPro" id="IPR001995">
    <property type="entry name" value="Peptidase_A2_cat"/>
</dbReference>
<dbReference type="InterPro" id="IPR021109">
    <property type="entry name" value="Peptidase_aspartic_dom_sf"/>
</dbReference>
<dbReference type="InterPro" id="IPR018061">
    <property type="entry name" value="Retropepsins"/>
</dbReference>
<dbReference type="InterPro" id="IPR008919">
    <property type="entry name" value="Retrov_capsid_N"/>
</dbReference>
<dbReference type="InterPro" id="IPR050462">
    <property type="entry name" value="Retroviral_Gag-Pol_poly"/>
</dbReference>
<dbReference type="InterPro" id="IPR010999">
    <property type="entry name" value="Retrovr_matrix"/>
</dbReference>
<dbReference type="InterPro" id="IPR043128">
    <property type="entry name" value="Rev_trsase/Diguanyl_cyclase"/>
</dbReference>
<dbReference type="InterPro" id="IPR012337">
    <property type="entry name" value="RNaseH-like_sf"/>
</dbReference>
<dbReference type="InterPro" id="IPR002156">
    <property type="entry name" value="RNaseH_domain"/>
</dbReference>
<dbReference type="InterPro" id="IPR036397">
    <property type="entry name" value="RNaseH_sf"/>
</dbReference>
<dbReference type="InterPro" id="IPR000477">
    <property type="entry name" value="RT_dom"/>
</dbReference>
<dbReference type="InterPro" id="IPR041577">
    <property type="entry name" value="RT_RNaseH_2"/>
</dbReference>
<dbReference type="InterPro" id="IPR001878">
    <property type="entry name" value="Znf_CCHC"/>
</dbReference>
<dbReference type="InterPro" id="IPR036875">
    <property type="entry name" value="Znf_CCHC_sf"/>
</dbReference>
<dbReference type="PANTHER" id="PTHR33166">
    <property type="entry name" value="GAG_P30 DOMAIN-CONTAINING PROTEIN"/>
    <property type="match status" value="1"/>
</dbReference>
<dbReference type="Pfam" id="PF01140">
    <property type="entry name" value="Gag_MA"/>
    <property type="match status" value="1"/>
</dbReference>
<dbReference type="Pfam" id="PF01141">
    <property type="entry name" value="Gag_p12"/>
    <property type="match status" value="1"/>
</dbReference>
<dbReference type="Pfam" id="PF02093">
    <property type="entry name" value="Gag_p30"/>
    <property type="match status" value="1"/>
</dbReference>
<dbReference type="Pfam" id="PF18697">
    <property type="entry name" value="MLVIN_C"/>
    <property type="match status" value="1"/>
</dbReference>
<dbReference type="Pfam" id="PF00075">
    <property type="entry name" value="RNase_H"/>
    <property type="match status" value="1"/>
</dbReference>
<dbReference type="Pfam" id="PF17919">
    <property type="entry name" value="RT_RNaseH_2"/>
    <property type="match status" value="1"/>
</dbReference>
<dbReference type="Pfam" id="PF00665">
    <property type="entry name" value="rve"/>
    <property type="match status" value="1"/>
</dbReference>
<dbReference type="Pfam" id="PF00077">
    <property type="entry name" value="RVP"/>
    <property type="match status" value="1"/>
</dbReference>
<dbReference type="Pfam" id="PF00078">
    <property type="entry name" value="RVT_1"/>
    <property type="match status" value="1"/>
</dbReference>
<dbReference type="Pfam" id="PF00098">
    <property type="entry name" value="zf-CCHC"/>
    <property type="match status" value="1"/>
</dbReference>
<dbReference type="Pfam" id="PF16721">
    <property type="entry name" value="zf-H3C2"/>
    <property type="match status" value="1"/>
</dbReference>
<dbReference type="SMART" id="SM00343">
    <property type="entry name" value="ZnF_C2HC"/>
    <property type="match status" value="1"/>
</dbReference>
<dbReference type="SUPFAM" id="SSF50630">
    <property type="entry name" value="Acid proteases"/>
    <property type="match status" value="1"/>
</dbReference>
<dbReference type="SUPFAM" id="SSF56672">
    <property type="entry name" value="DNA/RNA polymerases"/>
    <property type="match status" value="1"/>
</dbReference>
<dbReference type="SUPFAM" id="SSF47836">
    <property type="entry name" value="Retroviral matrix proteins"/>
    <property type="match status" value="1"/>
</dbReference>
<dbReference type="SUPFAM" id="SSF47943">
    <property type="entry name" value="Retrovirus capsid protein, N-terminal core domain"/>
    <property type="match status" value="1"/>
</dbReference>
<dbReference type="SUPFAM" id="SSF57756">
    <property type="entry name" value="Retrovirus zinc finger-like domains"/>
    <property type="match status" value="1"/>
</dbReference>
<dbReference type="SUPFAM" id="SSF53098">
    <property type="entry name" value="Ribonuclease H-like"/>
    <property type="match status" value="2"/>
</dbReference>
<dbReference type="PROSITE" id="PS50175">
    <property type="entry name" value="ASP_PROT_RETROV"/>
    <property type="match status" value="1"/>
</dbReference>
<dbReference type="PROSITE" id="PS00141">
    <property type="entry name" value="ASP_PROTEASE"/>
    <property type="match status" value="1"/>
</dbReference>
<dbReference type="PROSITE" id="PS50994">
    <property type="entry name" value="INTEGRASE"/>
    <property type="match status" value="1"/>
</dbReference>
<dbReference type="PROSITE" id="PS50879">
    <property type="entry name" value="RNASE_H_1"/>
    <property type="match status" value="1"/>
</dbReference>
<dbReference type="PROSITE" id="PS50878">
    <property type="entry name" value="RT_POL"/>
    <property type="match status" value="1"/>
</dbReference>
<dbReference type="PROSITE" id="PS50158">
    <property type="entry name" value="ZF_CCHC"/>
    <property type="match status" value="1"/>
</dbReference>
<gene>
    <name type="primary">pol</name>
</gene>
<accession>P26810</accession>
<comment type="function">
    <molecule>Gag-Pol polyprotein</molecule>
    <text evidence="1">Plays a role in budding and is processed by the viral protease during virion maturation outside the cell. During budding, it recruits, in a PPXY-dependent or independent manner, Nedd4-like ubiquitin ligases that conjugate ubiquitin molecules to Gag-Pol, or to Gag-Pol binding host factors. Interaction with HECT ubiquitin ligases probably links the viral protein to the host ESCRT pathway and facilitates release.</text>
</comment>
<comment type="function">
    <molecule>Matrix protein p15</molecule>
    <text evidence="1">Targets Gag and gag-pol polyproteins to the plasma membrane via a multipartite membrane binding signal, that includes its myristoylated N-terminus. Also mediates nuclear localization of the pre-integration complex.</text>
</comment>
<comment type="function">
    <molecule>RNA-binding phosphoprotein p12</molecule>
    <text evidence="3">Constituent of the pre-integration complex (PIC) which tethers the latter to mitotic chromosomes. This allows the integration of the viral genome into the host DNA.</text>
</comment>
<comment type="function">
    <molecule>Capsid protein p30</molecule>
    <text evidence="2">Forms the spherical core of the virion that encapsulates the genomic RNA-nucleocapsid complex.</text>
</comment>
<comment type="function">
    <molecule>Nucleocapsid protein p10-Pol</molecule>
    <text evidence="1 3">Involved in the packaging and encapsidation of two copies of the genome. Binds with high affinity to conserved UCUG elements within the packaging signal, located near the 5'-end of the genome. This binding is dependent on genome dimerization. Acts as a nucleic acid chaperone which is involved in rearrangement of nucleic acid secondary structures during gRNA retrotranscription.</text>
</comment>
<comment type="function">
    <molecule>Protease</molecule>
    <text evidence="1 7">The aspartyl protease mediates proteolytic cleavages of Gag and Gag-Pol polyproteins during or shortly after the release of the virion from the plasma membrane. Cleavages take place as an ordered, step-wise cascade to yield mature proteins. This process is called maturation. Displays maximal activity during the budding process just prior to particle release from the cell (Potential). Cleaves the translation initiation factor eIF4G leading to the inhibition of host cap-dependent translation (By similarity).</text>
</comment>
<comment type="function">
    <molecule>Reverse transcriptase/ribonuclease H</molecule>
    <text evidence="5">RT is a multifunctional enzyme that converts the viral dimeric RNA genome into dsDNA in the cytoplasm, shortly after virus entry into the cell. This enzyme displays a DNA polymerase activity that can copy either DNA or RNA templates, and a ribonuclease H (RNase H) activity that cleaves the RNA strand of RNA-DNA heteroduplexes in a partially processive 3' to 5' endonucleasic mode. Conversion of viral genomic RNA into dsDNA requires many steps. A tRNA binds to the primer-binding site (PBS) situated at the 5' end of the viral RNA. RT uses the 3' end of the tRNA primer to perform a short round of RNA-dependent minus-strand DNA synthesis. The reading proceeds through the U5 region and ends after the repeated (R) region which is present at both ends of viral RNA. The portion of the RNA-DNA heteroduplex is digested by the RNase H, resulting in a ssDNA product attached to the tRNA primer. This ssDNA/tRNA hybridizes with the identical R region situated at the 3' end of viral RNA. This template exchange, known as minus-strand DNA strong stop transfer, can be either intra- or intermolecular. RT uses the 3' end of this newly synthesized short ssDNA to perform the RNA-dependent minus-strand DNA synthesis of the whole template. RNase H digests the RNA template except for a polypurine tract (PPT) situated at the 5' end of the genome. It is not clear if both polymerase and RNase H activities are simultaneous. RNase H probably can proceed both in a polymerase-dependent (RNA cut into small fragments by the same RT performing DNA synthesis) and a polymerase-independent mode (cleavage of remaining RNA fragments by free RTs). Secondly, RT performs DNA-directed plus-strand DNA synthesis using the PPT that has not been removed by RNase H as primers. PPT and tRNA primers are then removed by RNase H. The 3' and 5' ssDNA PBS regions hybridize to form a circular dsDNA intermediate. Strand displacement synthesis by RT to the PBS and PPT ends produces a blunt ended, linear dsDNA copy of the viral genome that includes long terminal repeats (LTRs) at both ends.</text>
</comment>
<comment type="function">
    <molecule>Integrase</molecule>
    <text evidence="3">Catalyzes viral DNA integration into the host chromosome, by performing a series of DNA cutting and joining reactions. This enzyme activity takes place after virion entry into a cell and reverse transcription of the RNA genome in dsDNA. The first step in the integration process is 3' processing. This step requires a complex comprising the viral genome, matrix protein and integrase. This complex is called the pre-integration complex (PIC). The integrase protein removes 2 nucleotides from each 3' end of the viral DNA, leaving recessed CA OH's at the 3' ends. In the second step that requires cell division, the PIC enters cell nucleus. In the third step, termed strand transfer, the integrase protein joins the previously processed 3' ends to the 5' ends of strands of target cellular DNA at the site of integration. The last step is viral DNA integration into host chromosome.</text>
</comment>
<comment type="catalytic activity">
    <reaction evidence="8">
        <text>DNA(n) + a 2'-deoxyribonucleoside 5'-triphosphate = DNA(n+1) + diphosphate</text>
        <dbReference type="Rhea" id="RHEA:22508"/>
        <dbReference type="Rhea" id="RHEA-COMP:17339"/>
        <dbReference type="Rhea" id="RHEA-COMP:17340"/>
        <dbReference type="ChEBI" id="CHEBI:33019"/>
        <dbReference type="ChEBI" id="CHEBI:61560"/>
        <dbReference type="ChEBI" id="CHEBI:173112"/>
        <dbReference type="EC" id="2.7.7.49"/>
    </reaction>
</comment>
<comment type="catalytic activity">
    <reaction evidence="8">
        <text>DNA(n) + a 2'-deoxyribonucleoside 5'-triphosphate = DNA(n+1) + diphosphate</text>
        <dbReference type="Rhea" id="RHEA:22508"/>
        <dbReference type="Rhea" id="RHEA-COMP:17339"/>
        <dbReference type="Rhea" id="RHEA-COMP:17340"/>
        <dbReference type="ChEBI" id="CHEBI:33019"/>
        <dbReference type="ChEBI" id="CHEBI:61560"/>
        <dbReference type="ChEBI" id="CHEBI:173112"/>
        <dbReference type="EC" id="2.7.7.7"/>
    </reaction>
</comment>
<comment type="catalytic activity">
    <reaction evidence="9">
        <text>Endonucleolytic cleavage to 5'-phosphomonoester.</text>
        <dbReference type="EC" id="3.1.26.4"/>
    </reaction>
</comment>
<comment type="cofactor">
    <cofactor evidence="8">
        <name>Mg(2+)</name>
        <dbReference type="ChEBI" id="CHEBI:18420"/>
    </cofactor>
    <text evidence="8">The RT polymerase active site binds 2 magnesium ions.</text>
</comment>
<comment type="cofactor">
    <cofactor evidence="3">
        <name>Mg(2+)</name>
        <dbReference type="ChEBI" id="CHEBI:18420"/>
    </cofactor>
    <text evidence="3">Binds 1 magnesium ion for ribonuclease H (RNase H) activity.</text>
</comment>
<comment type="cofactor">
    <cofactor evidence="3">
        <name>Mg(2+)</name>
        <dbReference type="ChEBI" id="CHEBI:18420"/>
    </cofactor>
    <text evidence="3">Magnesium ions are required for integrase activity. Binds at least 1, maybe 2 magnesium ions.</text>
</comment>
<comment type="activity regulation">
    <molecule>Protease</molecule>
    <text evidence="3">Most efficiently inhibited by Amprenavir, which is able to block Gag-Pol processing in infected cells.</text>
</comment>
<comment type="subunit">
    <molecule>Capsid protein p30</molecule>
    <text evidence="3">Homohexamer; further associates as homomultimer (By similarity). The virus core is composed of a lattice formed from hexagonal rings, each containing six capsid monomers (By similarity).</text>
</comment>
<comment type="subunit">
    <molecule>Gag-Pol polyprotein</molecule>
    <text evidence="3">Interacts (via PPXY motif) with host NEDD4 (By similarity). Interacts (via PSAP motif) with host TSG101 (By similarity). Interacts (via LYPX(n)L motif) with host PDCD6IP (By similarity).</text>
</comment>
<comment type="subunit">
    <molecule>Reverse transcriptase/ribonuclease H</molecule>
    <text evidence="3 12">The reverse transcriptase is a monomer (Potential). Interacts (via RNase domains) with host release factor ETF1; this interaction is essential for translational readthrough of amber codon between viral gag and pol genes, as well as for viral replication (By similarity).</text>
</comment>
<comment type="subunit">
    <molecule>Integrase</molecule>
    <text evidence="3">Homodimer (By similarity).</text>
</comment>
<comment type="subcellular location">
    <molecule>Gag-Pol polyprotein</molecule>
    <subcellularLocation>
        <location evidence="1">Virion</location>
    </subcellularLocation>
    <subcellularLocation>
        <location evidence="1">Host cell membrane</location>
        <topology evidence="1">Lipid-anchor</topology>
    </subcellularLocation>
    <subcellularLocation>
        <location evidence="1">Host late endosome membrane</location>
        <topology evidence="1">Lipid-anchor</topology>
    </subcellularLocation>
    <subcellularLocation>
        <location evidence="4">Host endosome</location>
        <location evidence="4">Host multivesicular body</location>
    </subcellularLocation>
    <text evidence="3">These locations are probably linked to virus assembly sites.</text>
</comment>
<comment type="subcellular location">
    <molecule>Matrix protein p15</molecule>
    <subcellularLocation>
        <location evidence="3">Virion</location>
    </subcellularLocation>
</comment>
<comment type="subcellular location">
    <molecule>Capsid protein p30</molecule>
    <subcellularLocation>
        <location evidence="3">Virion</location>
    </subcellularLocation>
</comment>
<comment type="subcellular location">
    <molecule>Nucleocapsid protein p10-Pol</molecule>
    <subcellularLocation>
        <location evidence="3">Virion</location>
    </subcellularLocation>
</comment>
<comment type="subcellular location">
    <molecule>Protease</molecule>
    <subcellularLocation>
        <location evidence="3">Virion</location>
    </subcellularLocation>
</comment>
<comment type="subcellular location">
    <molecule>RNA-binding phosphoprotein p12</molecule>
    <subcellularLocation>
        <location evidence="3">Host cytoplasm</location>
    </subcellularLocation>
    <text evidence="3">Localizes to the host cytoplasm early in infection and binds to the mitotic chromosomes later on.</text>
</comment>
<comment type="domain">
    <molecule>Gag-Pol polyprotein</molecule>
    <text evidence="1">Late-budding domains (L domains) are short sequence motifs essential for viral particle release. They can occur individually or in close proximity within structural proteins. They interacts with sorting cellular proteins of the multivesicular body (MVB) pathway. Most of these proteins are class E vacuolar protein sorting factors belonging to ESCRT-I, ESCRT-II or ESCRT-III complexes. RNA-binding phosphoprotein p12 contains one L domain: a PPXY motif which potentially interacts with the WW domain 3 of NEDD4 E3 ubiquitin ligase. PPXY motif is essential for virus egress. Matrix protein p15 contains one L domain: a PTAP/PSAP motif, which potentially interacts with the UEV domain of TSG101. The junction between the matrix protein p15 and RNA-binding phosphoprotein p12 also contains one L domain: a LYPX(n)L motif which potentially interacts with PDCD6IP. Both PSAP and LYPX(n)L domains might play little to no role in budding and possibly drive residual virus release. contains.</text>
</comment>
<comment type="PTM">
    <molecule>Gag-Pol polyprotein</molecule>
    <text evidence="1">Ubiquitinated by ITCH. Gag can recruit the ubiquitin ligase Itch in an L domain-independent manner to facilitate virus release via a mechanism that involves Gag ubiquitination.</text>
</comment>
<comment type="PTM">
    <molecule>Gag-Pol polyprotein</molecule>
    <text evidence="3">Specific enzymatic cleavages by the viral protease yield mature proteins. The protease is released by autocatalytic cleavage. The polyprotein is cleaved during and after budding, this process is termed maturation.</text>
</comment>
<comment type="PTM">
    <molecule>Capsid protein p30</molecule>
    <text evidence="3">Sumoylated; which is required for virus replication.</text>
</comment>
<comment type="PTM">
    <molecule>RNA-binding phosphoprotein p12</molecule>
    <text evidence="3">Phosphorylated on serine residues.</text>
</comment>
<comment type="miscellaneous">
    <molecule>Gag-Pol polyprotein</molecule>
    <text evidence="3">This protein is translated as a gag-pol fusion protein by episodic readthrough of the gag protein termination codon. Readthrough of the terminator codon TAG occurs between the codons for 539-Asp and 541-Gly.</text>
</comment>
<comment type="miscellaneous">
    <molecule>Nucleocapsid protein p10-Pol</molecule>
    <text evidence="3">Nucleocapsid protein p10-Pol released from Pol polyprotein (NC-pol) is a few amino acids shorter than the nucleocapsid protein p10 released from Gag polyprotein (NC-gag).</text>
</comment>
<comment type="miscellaneous">
    <molecule>Reverse transcriptase/ribonuclease H</molecule>
    <text evidence="8">The reverse transcriptase is an error-prone enzyme that lacks a proof-reading function. High mutations rate is a direct consequence of this characteristic. RT also displays frequent template switching leading to high recombination rate. Recombination mostly occurs between homologous regions of the two copackaged RNA genomes. If these two RNA molecules derive from different viral strains, reverse transcription will give rise to highly recombinated proviral DNAs.</text>
</comment>
<comment type="similarity">
    <text evidence="12">Belongs to the retroviral Pol polyprotein family.</text>
</comment>
<name>POL_MLVF5</name>
<reference key="1">
    <citation type="submission" date="1990-09" db="EMBL/GenBank/DDBJ databases">
        <authorList>
            <person name="Friedrich R.W."/>
            <person name="Koch W."/>
            <person name="von Maydell-Livonius U."/>
            <person name="Schrewe H."/>
            <person name="Zimmermann W."/>
        </authorList>
    </citation>
    <scope>NUCLEOTIDE SEQUENCE [GENOMIC RNA]</scope>
</reference>
<protein>
    <recommendedName>
        <fullName>Gag-Pol polyprotein</fullName>
    </recommendedName>
    <component>
        <recommendedName>
            <fullName>Matrix protein p15</fullName>
        </recommendedName>
    </component>
    <component>
        <recommendedName>
            <fullName>RNA-binding phosphoprotein p12</fullName>
        </recommendedName>
        <alternativeName>
            <fullName>pp12</fullName>
        </alternativeName>
    </component>
    <component>
        <recommendedName>
            <fullName>Capsid protein p30</fullName>
        </recommendedName>
    </component>
    <component>
        <recommendedName>
            <fullName>Nucleocapsid protein p10-Pol</fullName>
            <shortName>NC-pol</shortName>
        </recommendedName>
    </component>
    <component>
        <recommendedName>
            <fullName>Protease</fullName>
            <ecNumber evidence="7">3.4.23.-</ecNumber>
        </recommendedName>
    </component>
    <component>
        <recommendedName>
            <fullName>Reverse transcriptase/ribonuclease H</fullName>
            <shortName>RT</shortName>
            <ecNumber evidence="8">2.7.7.49</ecNumber>
            <ecNumber evidence="8">2.7.7.7</ecNumber>
            <ecNumber evidence="9">3.1.26.4</ecNumber>
        </recommendedName>
    </component>
    <component>
        <recommendedName>
            <fullName>Integrase</fullName>
            <shortName>IN</shortName>
            <ecNumber evidence="3">2.7.7.-</ecNumber>
            <ecNumber evidence="3">3.1.-.-</ecNumber>
        </recommendedName>
    </component>
</protein>